<accession>B1JF56</accession>
<sequence>MRSKVTGAKRWVVKIGSALLTADGKGLDRGAMAVWVEQMVALREAGVELVLVSSGAVAAGMSQLGWTARPSAMNELQAAASIGQMRLVQAWESSFGEHGKHTAQILLTHDDLSDRKRYLNARSTLRTLVDLGVVPVINENDTVVTDEIRFGDNDTLAALVANLVEADLLVILTDRDGMFDADPRNNPEAQLIYEARADDPSLDAVAGGTGGALGRGGMQTKLRAARLAARSGAHTIIIGGRIERVLDRLKAGERLGTLLSPERGMLAARKQWLAGHLQTRGTLVLDAGAVQALRQANKSLLPVGVKTVQGSFRRGEMVVCVGPDGLEVARGLANYSALEAQKIIGQSSDAIESLLGYSAEPELVHRDNLVLV</sequence>
<evidence type="ECO:0000255" key="1">
    <source>
        <dbReference type="HAMAP-Rule" id="MF_00456"/>
    </source>
</evidence>
<protein>
    <recommendedName>
        <fullName evidence="1">Glutamate 5-kinase</fullName>
        <ecNumber evidence="1">2.7.2.11</ecNumber>
    </recommendedName>
    <alternativeName>
        <fullName evidence="1">Gamma-glutamyl kinase</fullName>
        <shortName evidence="1">GK</shortName>
    </alternativeName>
</protein>
<dbReference type="EC" id="2.7.2.11" evidence="1"/>
<dbReference type="EMBL" id="CP000949">
    <property type="protein sequence ID" value="ACA74974.1"/>
    <property type="molecule type" value="Genomic_DNA"/>
</dbReference>
<dbReference type="SMR" id="B1JF56"/>
<dbReference type="STRING" id="390235.PputW619_4494"/>
<dbReference type="KEGG" id="ppw:PputW619_4494"/>
<dbReference type="eggNOG" id="COG0263">
    <property type="taxonomic scope" value="Bacteria"/>
</dbReference>
<dbReference type="HOGENOM" id="CLU_025400_2_0_6"/>
<dbReference type="OrthoDB" id="9804434at2"/>
<dbReference type="UniPathway" id="UPA00098">
    <property type="reaction ID" value="UER00359"/>
</dbReference>
<dbReference type="GO" id="GO:0005829">
    <property type="term" value="C:cytosol"/>
    <property type="evidence" value="ECO:0007669"/>
    <property type="project" value="TreeGrafter"/>
</dbReference>
<dbReference type="GO" id="GO:0005524">
    <property type="term" value="F:ATP binding"/>
    <property type="evidence" value="ECO:0007669"/>
    <property type="project" value="UniProtKB-KW"/>
</dbReference>
<dbReference type="GO" id="GO:0004349">
    <property type="term" value="F:glutamate 5-kinase activity"/>
    <property type="evidence" value="ECO:0007669"/>
    <property type="project" value="UniProtKB-UniRule"/>
</dbReference>
<dbReference type="GO" id="GO:0003723">
    <property type="term" value="F:RNA binding"/>
    <property type="evidence" value="ECO:0007669"/>
    <property type="project" value="InterPro"/>
</dbReference>
<dbReference type="GO" id="GO:0055129">
    <property type="term" value="P:L-proline biosynthetic process"/>
    <property type="evidence" value="ECO:0007669"/>
    <property type="project" value="UniProtKB-UniRule"/>
</dbReference>
<dbReference type="CDD" id="cd04242">
    <property type="entry name" value="AAK_G5K_ProB"/>
    <property type="match status" value="1"/>
</dbReference>
<dbReference type="CDD" id="cd21157">
    <property type="entry name" value="PUA_G5K"/>
    <property type="match status" value="1"/>
</dbReference>
<dbReference type="FunFam" id="2.30.130.10:FF:000007">
    <property type="entry name" value="Glutamate 5-kinase"/>
    <property type="match status" value="1"/>
</dbReference>
<dbReference type="FunFam" id="3.40.1160.10:FF:000018">
    <property type="entry name" value="Glutamate 5-kinase"/>
    <property type="match status" value="1"/>
</dbReference>
<dbReference type="Gene3D" id="3.40.1160.10">
    <property type="entry name" value="Acetylglutamate kinase-like"/>
    <property type="match status" value="2"/>
</dbReference>
<dbReference type="Gene3D" id="2.30.130.10">
    <property type="entry name" value="PUA domain"/>
    <property type="match status" value="1"/>
</dbReference>
<dbReference type="HAMAP" id="MF_00456">
    <property type="entry name" value="ProB"/>
    <property type="match status" value="1"/>
</dbReference>
<dbReference type="InterPro" id="IPR036393">
    <property type="entry name" value="AceGlu_kinase-like_sf"/>
</dbReference>
<dbReference type="InterPro" id="IPR001048">
    <property type="entry name" value="Asp/Glu/Uridylate_kinase"/>
</dbReference>
<dbReference type="InterPro" id="IPR041739">
    <property type="entry name" value="G5K_ProB"/>
</dbReference>
<dbReference type="InterPro" id="IPR001057">
    <property type="entry name" value="Glu/AcGlu_kinase"/>
</dbReference>
<dbReference type="InterPro" id="IPR011529">
    <property type="entry name" value="Glu_5kinase"/>
</dbReference>
<dbReference type="InterPro" id="IPR005715">
    <property type="entry name" value="Glu_5kinase/COase_Synthase"/>
</dbReference>
<dbReference type="InterPro" id="IPR019797">
    <property type="entry name" value="Glutamate_5-kinase_CS"/>
</dbReference>
<dbReference type="InterPro" id="IPR002478">
    <property type="entry name" value="PUA"/>
</dbReference>
<dbReference type="InterPro" id="IPR015947">
    <property type="entry name" value="PUA-like_sf"/>
</dbReference>
<dbReference type="InterPro" id="IPR036974">
    <property type="entry name" value="PUA_sf"/>
</dbReference>
<dbReference type="NCBIfam" id="TIGR01027">
    <property type="entry name" value="proB"/>
    <property type="match status" value="1"/>
</dbReference>
<dbReference type="PANTHER" id="PTHR43654">
    <property type="entry name" value="GLUTAMATE 5-KINASE"/>
    <property type="match status" value="1"/>
</dbReference>
<dbReference type="PANTHER" id="PTHR43654:SF1">
    <property type="entry name" value="ISOPENTENYL PHOSPHATE KINASE"/>
    <property type="match status" value="1"/>
</dbReference>
<dbReference type="Pfam" id="PF00696">
    <property type="entry name" value="AA_kinase"/>
    <property type="match status" value="1"/>
</dbReference>
<dbReference type="Pfam" id="PF01472">
    <property type="entry name" value="PUA"/>
    <property type="match status" value="1"/>
</dbReference>
<dbReference type="PIRSF" id="PIRSF000729">
    <property type="entry name" value="GK"/>
    <property type="match status" value="1"/>
</dbReference>
<dbReference type="PRINTS" id="PR00474">
    <property type="entry name" value="GLU5KINASE"/>
</dbReference>
<dbReference type="SMART" id="SM00359">
    <property type="entry name" value="PUA"/>
    <property type="match status" value="1"/>
</dbReference>
<dbReference type="SUPFAM" id="SSF53633">
    <property type="entry name" value="Carbamate kinase-like"/>
    <property type="match status" value="1"/>
</dbReference>
<dbReference type="SUPFAM" id="SSF88697">
    <property type="entry name" value="PUA domain-like"/>
    <property type="match status" value="1"/>
</dbReference>
<dbReference type="PROSITE" id="PS00902">
    <property type="entry name" value="GLUTAMATE_5_KINASE"/>
    <property type="match status" value="1"/>
</dbReference>
<dbReference type="PROSITE" id="PS50890">
    <property type="entry name" value="PUA"/>
    <property type="match status" value="1"/>
</dbReference>
<gene>
    <name evidence="1" type="primary">proB</name>
    <name type="ordered locus">PputW619_4494</name>
</gene>
<name>PROB_PSEPW</name>
<feature type="chain" id="PRO_1000125250" description="Glutamate 5-kinase">
    <location>
        <begin position="1"/>
        <end position="372"/>
    </location>
</feature>
<feature type="domain" description="PUA" evidence="1">
    <location>
        <begin position="280"/>
        <end position="358"/>
    </location>
</feature>
<feature type="binding site" evidence="1">
    <location>
        <position position="14"/>
    </location>
    <ligand>
        <name>ATP</name>
        <dbReference type="ChEBI" id="CHEBI:30616"/>
    </ligand>
</feature>
<feature type="binding site" evidence="1">
    <location>
        <position position="54"/>
    </location>
    <ligand>
        <name>substrate</name>
    </ligand>
</feature>
<feature type="binding site" evidence="1">
    <location>
        <position position="141"/>
    </location>
    <ligand>
        <name>substrate</name>
    </ligand>
</feature>
<feature type="binding site" evidence="1">
    <location>
        <position position="153"/>
    </location>
    <ligand>
        <name>substrate</name>
    </ligand>
</feature>
<feature type="binding site" evidence="1">
    <location>
        <begin position="173"/>
        <end position="174"/>
    </location>
    <ligand>
        <name>ATP</name>
        <dbReference type="ChEBI" id="CHEBI:30616"/>
    </ligand>
</feature>
<reference key="1">
    <citation type="submission" date="2008-02" db="EMBL/GenBank/DDBJ databases">
        <title>Complete sequence of Pseudomonas putida W619.</title>
        <authorList>
            <person name="Copeland A."/>
            <person name="Lucas S."/>
            <person name="Lapidus A."/>
            <person name="Barry K."/>
            <person name="Detter J.C."/>
            <person name="Glavina del Rio T."/>
            <person name="Dalin E."/>
            <person name="Tice H."/>
            <person name="Pitluck S."/>
            <person name="Chain P."/>
            <person name="Malfatti S."/>
            <person name="Shin M."/>
            <person name="Vergez L."/>
            <person name="Schmutz J."/>
            <person name="Larimer F."/>
            <person name="Land M."/>
            <person name="Hauser L."/>
            <person name="Kyrpides N."/>
            <person name="Kim E."/>
            <person name="Taghavi S."/>
            <person name="Vangronsveld D."/>
            <person name="van der Lelie D."/>
            <person name="Richardson P."/>
        </authorList>
    </citation>
    <scope>NUCLEOTIDE SEQUENCE [LARGE SCALE GENOMIC DNA]</scope>
    <source>
        <strain>W619</strain>
    </source>
</reference>
<comment type="function">
    <text evidence="1">Catalyzes the transfer of a phosphate group to glutamate to form L-glutamate 5-phosphate.</text>
</comment>
<comment type="catalytic activity">
    <reaction evidence="1">
        <text>L-glutamate + ATP = L-glutamyl 5-phosphate + ADP</text>
        <dbReference type="Rhea" id="RHEA:14877"/>
        <dbReference type="ChEBI" id="CHEBI:29985"/>
        <dbReference type="ChEBI" id="CHEBI:30616"/>
        <dbReference type="ChEBI" id="CHEBI:58274"/>
        <dbReference type="ChEBI" id="CHEBI:456216"/>
        <dbReference type="EC" id="2.7.2.11"/>
    </reaction>
</comment>
<comment type="pathway">
    <text evidence="1">Amino-acid biosynthesis; L-proline biosynthesis; L-glutamate 5-semialdehyde from L-glutamate: step 1/2.</text>
</comment>
<comment type="subcellular location">
    <subcellularLocation>
        <location evidence="1">Cytoplasm</location>
    </subcellularLocation>
</comment>
<comment type="similarity">
    <text evidence="1">Belongs to the glutamate 5-kinase family.</text>
</comment>
<proteinExistence type="inferred from homology"/>
<keyword id="KW-0028">Amino-acid biosynthesis</keyword>
<keyword id="KW-0067">ATP-binding</keyword>
<keyword id="KW-0963">Cytoplasm</keyword>
<keyword id="KW-0418">Kinase</keyword>
<keyword id="KW-0547">Nucleotide-binding</keyword>
<keyword id="KW-0641">Proline biosynthesis</keyword>
<keyword id="KW-0808">Transferase</keyword>
<organism>
    <name type="scientific">Pseudomonas putida (strain W619)</name>
    <dbReference type="NCBI Taxonomy" id="390235"/>
    <lineage>
        <taxon>Bacteria</taxon>
        <taxon>Pseudomonadati</taxon>
        <taxon>Pseudomonadota</taxon>
        <taxon>Gammaproteobacteria</taxon>
        <taxon>Pseudomonadales</taxon>
        <taxon>Pseudomonadaceae</taxon>
        <taxon>Pseudomonas</taxon>
    </lineage>
</organism>